<protein>
    <recommendedName>
        <fullName evidence="1">Adenylosuccinate synthetase 2</fullName>
        <shortName evidence="1">AMPSase 2</shortName>
        <shortName evidence="1">AdSS 2</shortName>
        <ecNumber evidence="1">6.3.4.4</ecNumber>
    </recommendedName>
    <alternativeName>
        <fullName evidence="1">IMP--aspartate ligase 2</fullName>
    </alternativeName>
</protein>
<dbReference type="EC" id="6.3.4.4" evidence="1"/>
<dbReference type="EMBL" id="CR954246">
    <property type="protein sequence ID" value="CAI87007.1"/>
    <property type="molecule type" value="Genomic_DNA"/>
</dbReference>
<dbReference type="SMR" id="Q3IIQ6"/>
<dbReference type="STRING" id="326442.PSHAa1943"/>
<dbReference type="KEGG" id="pha:PSHAa1943"/>
<dbReference type="eggNOG" id="COG0104">
    <property type="taxonomic scope" value="Bacteria"/>
</dbReference>
<dbReference type="HOGENOM" id="CLU_029848_0_0_6"/>
<dbReference type="BioCyc" id="PHAL326442:PSHA_RS09595-MONOMER"/>
<dbReference type="UniPathway" id="UPA00075">
    <property type="reaction ID" value="UER00335"/>
</dbReference>
<dbReference type="Proteomes" id="UP000006843">
    <property type="component" value="Chromosome I"/>
</dbReference>
<dbReference type="GO" id="GO:0005737">
    <property type="term" value="C:cytoplasm"/>
    <property type="evidence" value="ECO:0007669"/>
    <property type="project" value="UniProtKB-SubCell"/>
</dbReference>
<dbReference type="GO" id="GO:0004019">
    <property type="term" value="F:adenylosuccinate synthase activity"/>
    <property type="evidence" value="ECO:0007669"/>
    <property type="project" value="UniProtKB-UniRule"/>
</dbReference>
<dbReference type="GO" id="GO:0005525">
    <property type="term" value="F:GTP binding"/>
    <property type="evidence" value="ECO:0007669"/>
    <property type="project" value="UniProtKB-UniRule"/>
</dbReference>
<dbReference type="GO" id="GO:0000287">
    <property type="term" value="F:magnesium ion binding"/>
    <property type="evidence" value="ECO:0007669"/>
    <property type="project" value="UniProtKB-UniRule"/>
</dbReference>
<dbReference type="GO" id="GO:0044208">
    <property type="term" value="P:'de novo' AMP biosynthetic process"/>
    <property type="evidence" value="ECO:0007669"/>
    <property type="project" value="UniProtKB-UniRule"/>
</dbReference>
<dbReference type="GO" id="GO:0046040">
    <property type="term" value="P:IMP metabolic process"/>
    <property type="evidence" value="ECO:0007669"/>
    <property type="project" value="TreeGrafter"/>
</dbReference>
<dbReference type="CDD" id="cd03108">
    <property type="entry name" value="AdSS"/>
    <property type="match status" value="1"/>
</dbReference>
<dbReference type="FunFam" id="3.90.170.10:FF:000001">
    <property type="entry name" value="Adenylosuccinate synthetase"/>
    <property type="match status" value="1"/>
</dbReference>
<dbReference type="Gene3D" id="3.40.440.10">
    <property type="entry name" value="Adenylosuccinate Synthetase, subunit A, domain 1"/>
    <property type="match status" value="1"/>
</dbReference>
<dbReference type="Gene3D" id="1.10.300.10">
    <property type="entry name" value="Adenylosuccinate Synthetase, subunit A, domain 2"/>
    <property type="match status" value="1"/>
</dbReference>
<dbReference type="Gene3D" id="3.90.170.10">
    <property type="entry name" value="Adenylosuccinate Synthetase, subunit A, domain 3"/>
    <property type="match status" value="1"/>
</dbReference>
<dbReference type="HAMAP" id="MF_00011">
    <property type="entry name" value="Adenylosucc_synth"/>
    <property type="match status" value="1"/>
</dbReference>
<dbReference type="InterPro" id="IPR042109">
    <property type="entry name" value="Adenylosuccinate_synth_dom1"/>
</dbReference>
<dbReference type="InterPro" id="IPR042110">
    <property type="entry name" value="Adenylosuccinate_synth_dom2"/>
</dbReference>
<dbReference type="InterPro" id="IPR042111">
    <property type="entry name" value="Adenylosuccinate_synth_dom3"/>
</dbReference>
<dbReference type="InterPro" id="IPR001114">
    <property type="entry name" value="Adenylosuccinate_synthetase"/>
</dbReference>
<dbReference type="InterPro" id="IPR027417">
    <property type="entry name" value="P-loop_NTPase"/>
</dbReference>
<dbReference type="NCBIfam" id="NF002223">
    <property type="entry name" value="PRK01117.1"/>
    <property type="match status" value="1"/>
</dbReference>
<dbReference type="PANTHER" id="PTHR11846">
    <property type="entry name" value="ADENYLOSUCCINATE SYNTHETASE"/>
    <property type="match status" value="1"/>
</dbReference>
<dbReference type="PANTHER" id="PTHR11846:SF0">
    <property type="entry name" value="ADENYLOSUCCINATE SYNTHETASE"/>
    <property type="match status" value="1"/>
</dbReference>
<dbReference type="Pfam" id="PF00709">
    <property type="entry name" value="Adenylsucc_synt"/>
    <property type="match status" value="1"/>
</dbReference>
<dbReference type="SMART" id="SM00788">
    <property type="entry name" value="Adenylsucc_synt"/>
    <property type="match status" value="1"/>
</dbReference>
<dbReference type="SUPFAM" id="SSF52540">
    <property type="entry name" value="P-loop containing nucleoside triphosphate hydrolases"/>
    <property type="match status" value="1"/>
</dbReference>
<gene>
    <name evidence="1" type="primary">purA2</name>
    <name type="ordered locus">PSHAa1943</name>
</gene>
<sequence length="418" mass="45407">MPSIVVVGANWGDEGKGRIVDFLAENASASIRFQGGNNAGHTVVNDFGTFKLHQLPSGIFNPDCIAVLGPGMVISPSALSEEIAEVKAAGVNVKLCISDRATLCLPLHALEDTLEELRLGDAAYGSTRQGISPAYGDRVMKKGILVGWLNQPDVLLERIQFMLDWKMPQLKALYPSCDFSQTAEEMTQWLLDVTAPWRAFICNVTEPLKALQKQNANLLFEAQLGAGRDLVYGEYPYTTSSNVTAAYAGIGSGLPALRPERVVAVAKSFSSSVGTGTLVTAMEEQDNFRESANEYGAVTGRPRDMGYFDAVATRNGVELQAATEIALTKIDCLSGMKDLKICVAYDGDHSENPIWPQTAALSPVYENMQPWDEDITGCRTFDSLPIAAQQYVERIEALMGVPITMVSVGPEREQMIIR</sequence>
<feature type="chain" id="PRO_0000224306" description="Adenylosuccinate synthetase 2">
    <location>
        <begin position="1"/>
        <end position="418"/>
    </location>
</feature>
<feature type="active site" description="Proton acceptor" evidence="1">
    <location>
        <position position="13"/>
    </location>
</feature>
<feature type="active site" description="Proton donor" evidence="1">
    <location>
        <position position="41"/>
    </location>
</feature>
<feature type="binding site" evidence="1">
    <location>
        <begin position="12"/>
        <end position="18"/>
    </location>
    <ligand>
        <name>GTP</name>
        <dbReference type="ChEBI" id="CHEBI:37565"/>
    </ligand>
</feature>
<feature type="binding site" description="in other chain" evidence="1">
    <location>
        <begin position="13"/>
        <end position="16"/>
    </location>
    <ligand>
        <name>IMP</name>
        <dbReference type="ChEBI" id="CHEBI:58053"/>
        <note>ligand shared between dimeric partners</note>
    </ligand>
</feature>
<feature type="binding site" evidence="1">
    <location>
        <position position="13"/>
    </location>
    <ligand>
        <name>Mg(2+)</name>
        <dbReference type="ChEBI" id="CHEBI:18420"/>
    </ligand>
</feature>
<feature type="binding site" description="in other chain" evidence="1">
    <location>
        <begin position="38"/>
        <end position="41"/>
    </location>
    <ligand>
        <name>IMP</name>
        <dbReference type="ChEBI" id="CHEBI:58053"/>
        <note>ligand shared between dimeric partners</note>
    </ligand>
</feature>
<feature type="binding site" evidence="1">
    <location>
        <begin position="40"/>
        <end position="42"/>
    </location>
    <ligand>
        <name>GTP</name>
        <dbReference type="ChEBI" id="CHEBI:37565"/>
    </ligand>
</feature>
<feature type="binding site" evidence="1">
    <location>
        <position position="40"/>
    </location>
    <ligand>
        <name>Mg(2+)</name>
        <dbReference type="ChEBI" id="CHEBI:18420"/>
    </ligand>
</feature>
<feature type="binding site" description="in other chain" evidence="1">
    <location>
        <position position="127"/>
    </location>
    <ligand>
        <name>IMP</name>
        <dbReference type="ChEBI" id="CHEBI:58053"/>
        <note>ligand shared between dimeric partners</note>
    </ligand>
</feature>
<feature type="binding site" evidence="1">
    <location>
        <position position="141"/>
    </location>
    <ligand>
        <name>IMP</name>
        <dbReference type="ChEBI" id="CHEBI:58053"/>
        <note>ligand shared between dimeric partners</note>
    </ligand>
</feature>
<feature type="binding site" description="in other chain" evidence="1">
    <location>
        <position position="239"/>
    </location>
    <ligand>
        <name>IMP</name>
        <dbReference type="ChEBI" id="CHEBI:58053"/>
        <note>ligand shared between dimeric partners</note>
    </ligand>
</feature>
<feature type="binding site" evidence="1">
    <location>
        <begin position="297"/>
        <end position="303"/>
    </location>
    <ligand>
        <name>substrate</name>
    </ligand>
</feature>
<feature type="binding site" description="in other chain" evidence="1">
    <location>
        <position position="301"/>
    </location>
    <ligand>
        <name>IMP</name>
        <dbReference type="ChEBI" id="CHEBI:58053"/>
        <note>ligand shared between dimeric partners</note>
    </ligand>
</feature>
<feature type="binding site" evidence="1">
    <location>
        <position position="303"/>
    </location>
    <ligand>
        <name>GTP</name>
        <dbReference type="ChEBI" id="CHEBI:37565"/>
    </ligand>
</feature>
<feature type="binding site" evidence="1">
    <location>
        <begin position="329"/>
        <end position="331"/>
    </location>
    <ligand>
        <name>GTP</name>
        <dbReference type="ChEBI" id="CHEBI:37565"/>
    </ligand>
</feature>
<feature type="binding site" evidence="1">
    <location>
        <begin position="407"/>
        <end position="409"/>
    </location>
    <ligand>
        <name>GTP</name>
        <dbReference type="ChEBI" id="CHEBI:37565"/>
    </ligand>
</feature>
<evidence type="ECO:0000255" key="1">
    <source>
        <dbReference type="HAMAP-Rule" id="MF_00011"/>
    </source>
</evidence>
<keyword id="KW-0963">Cytoplasm</keyword>
<keyword id="KW-0342">GTP-binding</keyword>
<keyword id="KW-0436">Ligase</keyword>
<keyword id="KW-0460">Magnesium</keyword>
<keyword id="KW-0479">Metal-binding</keyword>
<keyword id="KW-0547">Nucleotide-binding</keyword>
<keyword id="KW-0658">Purine biosynthesis</keyword>
<keyword id="KW-1185">Reference proteome</keyword>
<accession>Q3IIQ6</accession>
<name>PURA2_PSET1</name>
<proteinExistence type="inferred from homology"/>
<organism>
    <name type="scientific">Pseudoalteromonas translucida (strain TAC 125)</name>
    <dbReference type="NCBI Taxonomy" id="326442"/>
    <lineage>
        <taxon>Bacteria</taxon>
        <taxon>Pseudomonadati</taxon>
        <taxon>Pseudomonadota</taxon>
        <taxon>Gammaproteobacteria</taxon>
        <taxon>Alteromonadales</taxon>
        <taxon>Pseudoalteromonadaceae</taxon>
        <taxon>Pseudoalteromonas</taxon>
    </lineage>
</organism>
<reference key="1">
    <citation type="journal article" date="2005" name="Genome Res.">
        <title>Coping with cold: the genome of the versatile marine Antarctica bacterium Pseudoalteromonas haloplanktis TAC125.</title>
        <authorList>
            <person name="Medigue C."/>
            <person name="Krin E."/>
            <person name="Pascal G."/>
            <person name="Barbe V."/>
            <person name="Bernsel A."/>
            <person name="Bertin P.N."/>
            <person name="Cheung F."/>
            <person name="Cruveiller S."/>
            <person name="D'Amico S."/>
            <person name="Duilio A."/>
            <person name="Fang G."/>
            <person name="Feller G."/>
            <person name="Ho C."/>
            <person name="Mangenot S."/>
            <person name="Marino G."/>
            <person name="Nilsson J."/>
            <person name="Parrilli E."/>
            <person name="Rocha E.P.C."/>
            <person name="Rouy Z."/>
            <person name="Sekowska A."/>
            <person name="Tutino M.L."/>
            <person name="Vallenet D."/>
            <person name="von Heijne G."/>
            <person name="Danchin A."/>
        </authorList>
    </citation>
    <scope>NUCLEOTIDE SEQUENCE [LARGE SCALE GENOMIC DNA]</scope>
    <source>
        <strain>TAC 125</strain>
    </source>
</reference>
<comment type="function">
    <text evidence="1">Plays an important role in the de novo pathway of purine nucleotide biosynthesis. Catalyzes the first committed step in the biosynthesis of AMP from IMP.</text>
</comment>
<comment type="catalytic activity">
    <reaction evidence="1">
        <text>IMP + L-aspartate + GTP = N(6)-(1,2-dicarboxyethyl)-AMP + GDP + phosphate + 2 H(+)</text>
        <dbReference type="Rhea" id="RHEA:15753"/>
        <dbReference type="ChEBI" id="CHEBI:15378"/>
        <dbReference type="ChEBI" id="CHEBI:29991"/>
        <dbReference type="ChEBI" id="CHEBI:37565"/>
        <dbReference type="ChEBI" id="CHEBI:43474"/>
        <dbReference type="ChEBI" id="CHEBI:57567"/>
        <dbReference type="ChEBI" id="CHEBI:58053"/>
        <dbReference type="ChEBI" id="CHEBI:58189"/>
        <dbReference type="EC" id="6.3.4.4"/>
    </reaction>
</comment>
<comment type="cofactor">
    <cofactor evidence="1">
        <name>Mg(2+)</name>
        <dbReference type="ChEBI" id="CHEBI:18420"/>
    </cofactor>
    <text evidence="1">Binds 1 Mg(2+) ion per subunit.</text>
</comment>
<comment type="pathway">
    <text evidence="1">Purine metabolism; AMP biosynthesis via de novo pathway; AMP from IMP: step 1/2.</text>
</comment>
<comment type="subunit">
    <text evidence="1">Homodimer.</text>
</comment>
<comment type="subcellular location">
    <subcellularLocation>
        <location evidence="1">Cytoplasm</location>
    </subcellularLocation>
</comment>
<comment type="similarity">
    <text evidence="1">Belongs to the adenylosuccinate synthetase family.</text>
</comment>